<reference key="1">
    <citation type="journal article" date="2000" name="Nature">
        <title>The complete sequence of the mucosal pathogen Ureaplasma urealyticum.</title>
        <authorList>
            <person name="Glass J.I."/>
            <person name="Lefkowitz E.J."/>
            <person name="Glass J.S."/>
            <person name="Heiner C.R."/>
            <person name="Chen E.Y."/>
            <person name="Cassell G.H."/>
        </authorList>
    </citation>
    <scope>NUCLEOTIDE SEQUENCE [LARGE SCALE GENOMIC DNA]</scope>
    <source>
        <strain>ATCC 700970</strain>
    </source>
</reference>
<proteinExistence type="predicted"/>
<organism>
    <name type="scientific">Ureaplasma parvum serovar 3 (strain ATCC 700970)</name>
    <dbReference type="NCBI Taxonomy" id="273119"/>
    <lineage>
        <taxon>Bacteria</taxon>
        <taxon>Bacillati</taxon>
        <taxon>Mycoplasmatota</taxon>
        <taxon>Mycoplasmoidales</taxon>
        <taxon>Mycoplasmoidaceae</taxon>
        <taxon>Ureaplasma</taxon>
    </lineage>
</organism>
<name>Y166_UREPA</name>
<accession>Q9PQX7</accession>
<feature type="chain" id="PRO_0000220824" description="Uncharacterized protein UU166">
    <location>
        <begin position="1"/>
        <end position="944"/>
    </location>
</feature>
<protein>
    <recommendedName>
        <fullName>Uncharacterized protein UU166</fullName>
    </recommendedName>
</protein>
<dbReference type="EMBL" id="AF222894">
    <property type="protein sequence ID" value="AAF30573.1"/>
    <property type="molecule type" value="Genomic_DNA"/>
</dbReference>
<dbReference type="STRING" id="273119.UU166"/>
<dbReference type="EnsemblBacteria" id="AAF30573">
    <property type="protein sequence ID" value="AAF30573"/>
    <property type="gene ID" value="UU166"/>
</dbReference>
<dbReference type="KEGG" id="uur:UU166"/>
<dbReference type="PATRIC" id="fig|273119.6.peg.173"/>
<dbReference type="HOGENOM" id="CLU_275327_0_0_14"/>
<dbReference type="Proteomes" id="UP000000423">
    <property type="component" value="Chromosome"/>
</dbReference>
<gene>
    <name type="ordered locus">UU166</name>
</gene>
<keyword id="KW-1185">Reference proteome</keyword>
<sequence>MESLKMSNIYLDELEGYSQKNIEDSIDSLIEPNQKPIHLCPFRILKGFIKITNTGEQSLLVNDKDFSTVWNIKASNEPIIAYWDKSFTYNFKGSLNYISKDYARIDPSNTTLKNNFKPYYFQAWVQNYSQANNVSTIVFNDKEHTVIKTITTVTLIVKYPSVYEDEIYQNEQGNLVSHKAKFKQWTTDMLKEYLFIIPDEHAQANQWLMVNEVIPFYSTTSKRYEGAQITLTNVNDLLTSSGNDILATIQPCQPGDGYLWPVIQNGKLTYDERKEKPLGVKSIQLLTNGPYALNSMLITGRTYNNDTRELSANKRLLLYKAKIPVASKFFNVSAPTSNYVYLYNAFFEIEKIYKDQYEKQKDFTFDHNANIKLNGGLLLNHKWDASNNALSYEDNRYPFKLWDEGFKIHASFFNFKLGGTGAQKGGSLTENAEQKKPLADAVVTGQVAGEVVSTVFESIGRNVSQGFNLNNLGLWSFNMGFAKTKAEQIKEATKIGLNNITMPPGTNLHTFLNHNAFMYDLIKYLPYSYKETIRQNLGELIDNTPLSLGKVRRGIVDILYPGWTKVEDATGYNMSNIWLNTRGFNFIAPCLPLELEVSNKLKADLINLDIFTNKPAKTFSPLGIPAIACCYHFDITDRFAKFVDDELKVFDTELIGQTTYRDGTYIRKDKKPLYWDSFCEALPPNTPLSYEPAVINIASGKREDVNRVKYPYVIDTIDIKGLGKCDIKLTAFSGFYSPDARLKDEFKNVYEAIFESNGKYTDDMSQWSNYINFSTLDEINSVGTKLSYPKPPVETDFLKNTKTNSDDGVNASLQTINETLYKVGDNSLLSATQYRKPRFYFYEPDSSKLANLFGYGSYTNKLNYLFGGSNLSDVIVANKVIAYSFVFKWDFNYREWLNLGSVNKTKRNLKLTFEIESNWIQKGWTNQFNVDNSFNQLITLLVLN</sequence>